<evidence type="ECO:0000255" key="1">
    <source>
        <dbReference type="HAMAP-Rule" id="MF_01726"/>
    </source>
</evidence>
<feature type="chain" id="PRO_0000286290" description="Spermidine/putrescine import ATP-binding protein PotA">
    <location>
        <begin position="1"/>
        <end position="350"/>
    </location>
</feature>
<feature type="domain" description="ABC transporter" evidence="1">
    <location>
        <begin position="6"/>
        <end position="236"/>
    </location>
</feature>
<feature type="binding site" evidence="1">
    <location>
        <begin position="38"/>
        <end position="45"/>
    </location>
    <ligand>
        <name>ATP</name>
        <dbReference type="ChEBI" id="CHEBI:30616"/>
    </ligand>
</feature>
<dbReference type="EC" id="7.6.2.11" evidence="1"/>
<dbReference type="EMBL" id="AM285303">
    <property type="protein sequence ID" value="CAK98422.1"/>
    <property type="molecule type" value="Genomic_DNA"/>
</dbReference>
<dbReference type="RefSeq" id="WP_071891696.1">
    <property type="nucleotide sequence ID" value="NZ_CP013197.1"/>
</dbReference>
<dbReference type="SMR" id="Q14Q07"/>
<dbReference type="STRING" id="2133.SCITRI_00171"/>
<dbReference type="GeneID" id="54238116"/>
<dbReference type="OrthoDB" id="9802264at2"/>
<dbReference type="GO" id="GO:0043190">
    <property type="term" value="C:ATP-binding cassette (ABC) transporter complex"/>
    <property type="evidence" value="ECO:0007669"/>
    <property type="project" value="InterPro"/>
</dbReference>
<dbReference type="GO" id="GO:0015594">
    <property type="term" value="F:ABC-type putrescine transporter activity"/>
    <property type="evidence" value="ECO:0007669"/>
    <property type="project" value="InterPro"/>
</dbReference>
<dbReference type="GO" id="GO:0005524">
    <property type="term" value="F:ATP binding"/>
    <property type="evidence" value="ECO:0007669"/>
    <property type="project" value="UniProtKB-KW"/>
</dbReference>
<dbReference type="GO" id="GO:0016887">
    <property type="term" value="F:ATP hydrolysis activity"/>
    <property type="evidence" value="ECO:0007669"/>
    <property type="project" value="InterPro"/>
</dbReference>
<dbReference type="CDD" id="cd03300">
    <property type="entry name" value="ABC_PotA_N"/>
    <property type="match status" value="1"/>
</dbReference>
<dbReference type="FunFam" id="3.40.50.300:FF:000133">
    <property type="entry name" value="Spermidine/putrescine import ATP-binding protein PotA"/>
    <property type="match status" value="1"/>
</dbReference>
<dbReference type="Gene3D" id="2.40.50.100">
    <property type="match status" value="1"/>
</dbReference>
<dbReference type="Gene3D" id="3.40.50.300">
    <property type="entry name" value="P-loop containing nucleotide triphosphate hydrolases"/>
    <property type="match status" value="1"/>
</dbReference>
<dbReference type="InterPro" id="IPR003593">
    <property type="entry name" value="AAA+_ATPase"/>
</dbReference>
<dbReference type="InterPro" id="IPR050093">
    <property type="entry name" value="ABC_SmlMolc_Importer"/>
</dbReference>
<dbReference type="InterPro" id="IPR003439">
    <property type="entry name" value="ABC_transporter-like_ATP-bd"/>
</dbReference>
<dbReference type="InterPro" id="IPR017871">
    <property type="entry name" value="ABC_transporter-like_CS"/>
</dbReference>
<dbReference type="InterPro" id="IPR008995">
    <property type="entry name" value="Mo/tungstate-bd_C_term_dom"/>
</dbReference>
<dbReference type="InterPro" id="IPR027417">
    <property type="entry name" value="P-loop_NTPase"/>
</dbReference>
<dbReference type="InterPro" id="IPR005893">
    <property type="entry name" value="PotA-like"/>
</dbReference>
<dbReference type="InterPro" id="IPR017879">
    <property type="entry name" value="PotA_ATP-bd"/>
</dbReference>
<dbReference type="InterPro" id="IPR013611">
    <property type="entry name" value="Transp-assoc_OB_typ2"/>
</dbReference>
<dbReference type="NCBIfam" id="NF043075">
    <property type="entry name" value="MMSYN1_0197"/>
    <property type="match status" value="1"/>
</dbReference>
<dbReference type="NCBIfam" id="TIGR01187">
    <property type="entry name" value="potA"/>
    <property type="match status" value="1"/>
</dbReference>
<dbReference type="PANTHER" id="PTHR42781">
    <property type="entry name" value="SPERMIDINE/PUTRESCINE IMPORT ATP-BINDING PROTEIN POTA"/>
    <property type="match status" value="1"/>
</dbReference>
<dbReference type="PANTHER" id="PTHR42781:SF4">
    <property type="entry name" value="SPERMIDINE_PUTRESCINE IMPORT ATP-BINDING PROTEIN POTA"/>
    <property type="match status" value="1"/>
</dbReference>
<dbReference type="Pfam" id="PF00005">
    <property type="entry name" value="ABC_tran"/>
    <property type="match status" value="1"/>
</dbReference>
<dbReference type="Pfam" id="PF08402">
    <property type="entry name" value="TOBE_2"/>
    <property type="match status" value="1"/>
</dbReference>
<dbReference type="SMART" id="SM00382">
    <property type="entry name" value="AAA"/>
    <property type="match status" value="1"/>
</dbReference>
<dbReference type="SUPFAM" id="SSF50331">
    <property type="entry name" value="MOP-like"/>
    <property type="match status" value="1"/>
</dbReference>
<dbReference type="SUPFAM" id="SSF52540">
    <property type="entry name" value="P-loop containing nucleoside triphosphate hydrolases"/>
    <property type="match status" value="1"/>
</dbReference>
<dbReference type="PROSITE" id="PS00211">
    <property type="entry name" value="ABC_TRANSPORTER_1"/>
    <property type="match status" value="1"/>
</dbReference>
<dbReference type="PROSITE" id="PS50893">
    <property type="entry name" value="ABC_TRANSPORTER_2"/>
    <property type="match status" value="1"/>
</dbReference>
<dbReference type="PROSITE" id="PS51305">
    <property type="entry name" value="POTA"/>
    <property type="match status" value="1"/>
</dbReference>
<proteinExistence type="inferred from homology"/>
<reference key="1">
    <citation type="submission" date="2006-06" db="EMBL/GenBank/DDBJ databases">
        <title>The partial chromosome sequence of Spiroplasma citri GII3-3X.</title>
        <authorList>
            <person name="Carle P."/>
            <person name="Saillard C."/>
            <person name="Blanchard A."/>
            <person name="Carrere N."/>
            <person name="Carrere S."/>
            <person name="Duret S."/>
            <person name="Eveillard S."/>
            <person name="Gaurivaud P."/>
            <person name="Gourgues G."/>
            <person name="Gouzy J."/>
            <person name="Henry A."/>
            <person name="Salar P."/>
            <person name="Laigret F."/>
            <person name="Bove J.M."/>
            <person name="Renaudin J."/>
            <person name="Foissac X."/>
        </authorList>
    </citation>
    <scope>NUCLEOTIDE SEQUENCE [GENOMIC DNA]</scope>
    <source>
        <strain>GII-3-3X</strain>
    </source>
</reference>
<accession>Q14Q07</accession>
<name>POTA_SPICI</name>
<organism>
    <name type="scientific">Spiroplasma citri</name>
    <dbReference type="NCBI Taxonomy" id="2133"/>
    <lineage>
        <taxon>Bacteria</taxon>
        <taxon>Bacillati</taxon>
        <taxon>Mycoplasmatota</taxon>
        <taxon>Mollicutes</taxon>
        <taxon>Entomoplasmatales</taxon>
        <taxon>Spiroplasmataceae</taxon>
        <taxon>Spiroplasma</taxon>
    </lineage>
</organism>
<keyword id="KW-0067">ATP-binding</keyword>
<keyword id="KW-1003">Cell membrane</keyword>
<keyword id="KW-0472">Membrane</keyword>
<keyword id="KW-0547">Nucleotide-binding</keyword>
<keyword id="KW-1278">Translocase</keyword>
<keyword id="KW-0813">Transport</keyword>
<protein>
    <recommendedName>
        <fullName evidence="1">Spermidine/putrescine import ATP-binding protein PotA</fullName>
        <ecNumber evidence="1">7.6.2.11</ecNumber>
    </recommendedName>
</protein>
<gene>
    <name evidence="1" type="primary">potA</name>
    <name type="ORF">SPICI02_028</name>
</gene>
<sequence length="350" mass="39593">METNILELRNISKQYDGKVVLKGINLNIKEGEFVTLLGPSGCGKTTTLRIIAGFEQPNSGELLFLGKDYLKTPVHKREVNTVFQNYALFPHLTVFDNIAYGLKVKRNKYDVIETEVKKFLQLVGLEGFEDKSVEQLSGGQRQRVALARALINKPRVLLLDEPMAALDVKLRKKMQAELKALQGEIGITFILVTHDQEEALTLSDRIIVMNDGAIQQVGTPAEIYNEPENLWTAQFIGDSNIISNAIFIKDNLVTIDGKKIVCVDRGFGENENQIDIIIRPEDIDIVPVGKGFFTGTVKRVNFKGVHWEIIVKCKERKYLIHSTDRVEEGDQVDISWNVEDIHVMWKEIDD</sequence>
<comment type="function">
    <text evidence="1">Part of the ABC transporter complex PotABCD involved in spermidine/putrescine import. Responsible for energy coupling to the transport system.</text>
</comment>
<comment type="catalytic activity">
    <reaction evidence="1">
        <text>ATP + H2O + polyamine-[polyamine-binding protein]Side 1 = ADP + phosphate + polyamineSide 2 + [polyamine-binding protein]Side 1.</text>
        <dbReference type="EC" id="7.6.2.11"/>
    </reaction>
</comment>
<comment type="subunit">
    <text evidence="1">The complex is composed of two ATP-binding proteins (PotA), two transmembrane proteins (PotB and PotC) and a solute-binding protein (PotD).</text>
</comment>
<comment type="subcellular location">
    <subcellularLocation>
        <location evidence="1">Cell membrane</location>
        <topology evidence="1">Peripheral membrane protein</topology>
    </subcellularLocation>
</comment>
<comment type="similarity">
    <text evidence="1">Belongs to the ABC transporter superfamily. Spermidine/putrescine importer (TC 3.A.1.11.1) family.</text>
</comment>